<proteinExistence type="inferred from homology"/>
<gene>
    <name evidence="1" type="primary">EIF6</name>
    <name type="ORF">EDI_198960</name>
</gene>
<organism>
    <name type="scientific">Entamoeba dispar (strain ATCC PRA-260 / SAW760)</name>
    <dbReference type="NCBI Taxonomy" id="370354"/>
    <lineage>
        <taxon>Eukaryota</taxon>
        <taxon>Amoebozoa</taxon>
        <taxon>Evosea</taxon>
        <taxon>Archamoebae</taxon>
        <taxon>Mastigamoebida</taxon>
        <taxon>Entamoebidae</taxon>
        <taxon>Entamoeba</taxon>
    </lineage>
</organism>
<feature type="chain" id="PRO_0000402099" description="Eukaryotic translation initiation factor 6">
    <location>
        <begin position="1"/>
        <end position="239"/>
    </location>
</feature>
<reference key="1">
    <citation type="submission" date="2007-12" db="EMBL/GenBank/DDBJ databases">
        <title>Annotation of Entamoeba dispar SAW760.</title>
        <authorList>
            <person name="Lorenzi H."/>
            <person name="Inman J."/>
            <person name="Schobel S."/>
            <person name="Amedeo P."/>
            <person name="Caler E."/>
        </authorList>
    </citation>
    <scope>NUCLEOTIDE SEQUENCE [LARGE SCALE GENOMIC DNA]</scope>
    <source>
        <strain>ATCC PRA-260 / SAW760</strain>
    </source>
</reference>
<sequence>MALRAEYENSADIGVFTKLTNKYCITAPGGSSSYKIIEQEVSPKIPCVEATIGGLRIIGRLAVGNRKGLLLPNTCNDQELLHLRNSLPDDVVVQRVEERMSALGNCIACNDYVALVHPEIDRETEEIIADVLGVEVFRHAVGGNPLVGTYSVITNKGAMLAPNTTQQEQEEIGTILQVPLVAGTVNRGSNLLGSGMIVNDWCGFVGMDTTATELSIVEGIYKLRNETDVQFASVMELMK</sequence>
<evidence type="ECO:0000255" key="1">
    <source>
        <dbReference type="HAMAP-Rule" id="MF_03132"/>
    </source>
</evidence>
<evidence type="ECO:0000305" key="2"/>
<name>IF6_ENTDS</name>
<dbReference type="EMBL" id="DS550044">
    <property type="protein sequence ID" value="EDR24107.1"/>
    <property type="status" value="ALT_INIT"/>
    <property type="molecule type" value="Genomic_DNA"/>
</dbReference>
<dbReference type="RefSeq" id="XP_001739507.1">
    <property type="nucleotide sequence ID" value="XM_001739455.1"/>
</dbReference>
<dbReference type="SMR" id="B0EMY3"/>
<dbReference type="EnsemblProtists" id="EDR24107">
    <property type="protein sequence ID" value="EDR24107"/>
    <property type="gene ID" value="EDI_198960"/>
</dbReference>
<dbReference type="GeneID" id="5884642"/>
<dbReference type="KEGG" id="edi:EDI_198960"/>
<dbReference type="eggNOG" id="KOG3185">
    <property type="taxonomic scope" value="Eukaryota"/>
</dbReference>
<dbReference type="OrthoDB" id="4155914at2759"/>
<dbReference type="Proteomes" id="UP000008076">
    <property type="component" value="Unassembled WGS sequence"/>
</dbReference>
<dbReference type="GO" id="GO:0005737">
    <property type="term" value="C:cytoplasm"/>
    <property type="evidence" value="ECO:0007669"/>
    <property type="project" value="UniProtKB-SubCell"/>
</dbReference>
<dbReference type="GO" id="GO:0005730">
    <property type="term" value="C:nucleolus"/>
    <property type="evidence" value="ECO:0007669"/>
    <property type="project" value="UniProtKB-SubCell"/>
</dbReference>
<dbReference type="GO" id="GO:0043023">
    <property type="term" value="F:ribosomal large subunit binding"/>
    <property type="evidence" value="ECO:0007669"/>
    <property type="project" value="UniProtKB-UniRule"/>
</dbReference>
<dbReference type="GO" id="GO:0003743">
    <property type="term" value="F:translation initiation factor activity"/>
    <property type="evidence" value="ECO:0007669"/>
    <property type="project" value="UniProtKB-UniRule"/>
</dbReference>
<dbReference type="GO" id="GO:0042256">
    <property type="term" value="P:cytosolic ribosome assembly"/>
    <property type="evidence" value="ECO:0007669"/>
    <property type="project" value="UniProtKB-UniRule"/>
</dbReference>
<dbReference type="GO" id="GO:0042273">
    <property type="term" value="P:ribosomal large subunit biogenesis"/>
    <property type="evidence" value="ECO:0007669"/>
    <property type="project" value="UniProtKB-UniRule"/>
</dbReference>
<dbReference type="CDD" id="cd00527">
    <property type="entry name" value="IF6"/>
    <property type="match status" value="1"/>
</dbReference>
<dbReference type="FunFam" id="3.75.10.10:FF:000006">
    <property type="entry name" value="Eukaryotic translation initiation factor 6"/>
    <property type="match status" value="1"/>
</dbReference>
<dbReference type="Gene3D" id="3.75.10.10">
    <property type="entry name" value="L-arginine/glycine Amidinotransferase, Chain A"/>
    <property type="match status" value="1"/>
</dbReference>
<dbReference type="HAMAP" id="MF_00032">
    <property type="entry name" value="eIF_6"/>
    <property type="match status" value="1"/>
</dbReference>
<dbReference type="InterPro" id="IPR002769">
    <property type="entry name" value="eIF6"/>
</dbReference>
<dbReference type="NCBIfam" id="TIGR00323">
    <property type="entry name" value="eIF-6"/>
    <property type="match status" value="1"/>
</dbReference>
<dbReference type="PANTHER" id="PTHR10784">
    <property type="entry name" value="TRANSLATION INITIATION FACTOR 6"/>
    <property type="match status" value="1"/>
</dbReference>
<dbReference type="Pfam" id="PF01912">
    <property type="entry name" value="eIF-6"/>
    <property type="match status" value="1"/>
</dbReference>
<dbReference type="PIRSF" id="PIRSF006413">
    <property type="entry name" value="IF-6"/>
    <property type="match status" value="1"/>
</dbReference>
<dbReference type="SMART" id="SM00654">
    <property type="entry name" value="eIF6"/>
    <property type="match status" value="1"/>
</dbReference>
<dbReference type="SUPFAM" id="SSF55909">
    <property type="entry name" value="Pentein"/>
    <property type="match status" value="1"/>
</dbReference>
<accession>B0EMY3</accession>
<protein>
    <recommendedName>
        <fullName evidence="1">Eukaryotic translation initiation factor 6</fullName>
        <shortName evidence="1">eIF-6</shortName>
    </recommendedName>
</protein>
<comment type="function">
    <text evidence="1">Binds to the 60S ribosomal subunit and prevents its association with the 40S ribosomal subunit to form the 80S initiation complex in the cytoplasm. May also be involved in ribosome biogenesis.</text>
</comment>
<comment type="subunit">
    <text evidence="1">Monomer. Associates with the 60S ribosomal subunit.</text>
</comment>
<comment type="subcellular location">
    <subcellularLocation>
        <location evidence="1">Cytoplasm</location>
    </subcellularLocation>
    <subcellularLocation>
        <location evidence="1">Nucleus</location>
        <location evidence="1">Nucleolus</location>
    </subcellularLocation>
    <text evidence="1">Shuttles between cytoplasm and nucleus/nucleolus.</text>
</comment>
<comment type="similarity">
    <text evidence="1">Belongs to the eIF-6 family.</text>
</comment>
<comment type="sequence caution" evidence="2">
    <conflict type="erroneous initiation">
        <sequence resource="EMBL-CDS" id="EDR24107"/>
    </conflict>
    <text>Extended N-terminus.</text>
</comment>
<keyword id="KW-0963">Cytoplasm</keyword>
<keyword id="KW-0396">Initiation factor</keyword>
<keyword id="KW-0539">Nucleus</keyword>
<keyword id="KW-0648">Protein biosynthesis</keyword>
<keyword id="KW-0690">Ribosome biogenesis</keyword>